<protein>
    <recommendedName>
        <fullName evidence="1">3-phosphoshikimate 1-carboxyvinyltransferase</fullName>
        <ecNumber evidence="1">2.5.1.19</ecNumber>
    </recommendedName>
    <alternativeName>
        <fullName evidence="1">5-enolpyruvylshikimate-3-phosphate synthase</fullName>
        <shortName evidence="1">EPSP synthase</shortName>
        <shortName evidence="1">EPSPS</shortName>
    </alternativeName>
</protein>
<feature type="chain" id="PRO_0000088216" description="3-phosphoshikimate 1-carboxyvinyltransferase">
    <location>
        <begin position="1"/>
        <end position="425"/>
    </location>
</feature>
<feature type="active site" description="Proton acceptor" evidence="1">
    <location>
        <position position="314"/>
    </location>
</feature>
<feature type="binding site" evidence="1">
    <location>
        <position position="23"/>
    </location>
    <ligand>
        <name>3-phosphoshikimate</name>
        <dbReference type="ChEBI" id="CHEBI:145989"/>
    </ligand>
</feature>
<feature type="binding site" evidence="1">
    <location>
        <position position="23"/>
    </location>
    <ligand>
        <name>phosphoenolpyruvate</name>
        <dbReference type="ChEBI" id="CHEBI:58702"/>
    </ligand>
</feature>
<feature type="binding site" evidence="1">
    <location>
        <position position="24"/>
    </location>
    <ligand>
        <name>3-phosphoshikimate</name>
        <dbReference type="ChEBI" id="CHEBI:145989"/>
    </ligand>
</feature>
<feature type="binding site" evidence="1">
    <location>
        <position position="28"/>
    </location>
    <ligand>
        <name>3-phosphoshikimate</name>
        <dbReference type="ChEBI" id="CHEBI:145989"/>
    </ligand>
</feature>
<feature type="binding site" evidence="1">
    <location>
        <position position="96"/>
    </location>
    <ligand>
        <name>phosphoenolpyruvate</name>
        <dbReference type="ChEBI" id="CHEBI:58702"/>
    </ligand>
</feature>
<feature type="binding site" evidence="1">
    <location>
        <position position="124"/>
    </location>
    <ligand>
        <name>phosphoenolpyruvate</name>
        <dbReference type="ChEBI" id="CHEBI:58702"/>
    </ligand>
</feature>
<feature type="binding site" evidence="1">
    <location>
        <position position="170"/>
    </location>
    <ligand>
        <name>3-phosphoshikimate</name>
        <dbReference type="ChEBI" id="CHEBI:145989"/>
    </ligand>
</feature>
<feature type="binding site" evidence="1">
    <location>
        <position position="171"/>
    </location>
    <ligand>
        <name>3-phosphoshikimate</name>
        <dbReference type="ChEBI" id="CHEBI:145989"/>
    </ligand>
</feature>
<feature type="binding site" evidence="1">
    <location>
        <position position="172"/>
    </location>
    <ligand>
        <name>3-phosphoshikimate</name>
        <dbReference type="ChEBI" id="CHEBI:145989"/>
    </ligand>
</feature>
<feature type="binding site" evidence="1">
    <location>
        <position position="172"/>
    </location>
    <ligand>
        <name>phosphoenolpyruvate</name>
        <dbReference type="ChEBI" id="CHEBI:58702"/>
    </ligand>
</feature>
<feature type="binding site" evidence="1">
    <location>
        <position position="198"/>
    </location>
    <ligand>
        <name>3-phosphoshikimate</name>
        <dbReference type="ChEBI" id="CHEBI:145989"/>
    </ligand>
</feature>
<feature type="binding site" evidence="1">
    <location>
        <position position="314"/>
    </location>
    <ligand>
        <name>3-phosphoshikimate</name>
        <dbReference type="ChEBI" id="CHEBI:145989"/>
    </ligand>
</feature>
<feature type="binding site" evidence="1">
    <location>
        <position position="341"/>
    </location>
    <ligand>
        <name>3-phosphoshikimate</name>
        <dbReference type="ChEBI" id="CHEBI:145989"/>
    </ligand>
</feature>
<feature type="binding site" evidence="1">
    <location>
        <position position="345"/>
    </location>
    <ligand>
        <name>phosphoenolpyruvate</name>
        <dbReference type="ChEBI" id="CHEBI:58702"/>
    </ligand>
</feature>
<feature type="binding site" evidence="1">
    <location>
        <position position="386"/>
    </location>
    <ligand>
        <name>phosphoenolpyruvate</name>
        <dbReference type="ChEBI" id="CHEBI:58702"/>
    </ligand>
</feature>
<feature type="binding site" evidence="1">
    <location>
        <position position="411"/>
    </location>
    <ligand>
        <name>phosphoenolpyruvate</name>
        <dbReference type="ChEBI" id="CHEBI:58702"/>
    </ligand>
</feature>
<gene>
    <name evidence="1" type="primary">aroA</name>
    <name type="ordered locus">all5019</name>
</gene>
<evidence type="ECO:0000255" key="1">
    <source>
        <dbReference type="HAMAP-Rule" id="MF_00210"/>
    </source>
</evidence>
<reference key="1">
    <citation type="journal article" date="2001" name="DNA Res.">
        <title>Complete genomic sequence of the filamentous nitrogen-fixing cyanobacterium Anabaena sp. strain PCC 7120.</title>
        <authorList>
            <person name="Kaneko T."/>
            <person name="Nakamura Y."/>
            <person name="Wolk C.P."/>
            <person name="Kuritz T."/>
            <person name="Sasamoto S."/>
            <person name="Watanabe A."/>
            <person name="Iriguchi M."/>
            <person name="Ishikawa A."/>
            <person name="Kawashima K."/>
            <person name="Kimura T."/>
            <person name="Kishida Y."/>
            <person name="Kohara M."/>
            <person name="Matsumoto M."/>
            <person name="Matsuno A."/>
            <person name="Muraki A."/>
            <person name="Nakazaki N."/>
            <person name="Shimpo S."/>
            <person name="Sugimoto M."/>
            <person name="Takazawa M."/>
            <person name="Yamada M."/>
            <person name="Yasuda M."/>
            <person name="Tabata S."/>
        </authorList>
    </citation>
    <scope>NUCLEOTIDE SEQUENCE [LARGE SCALE GENOMIC DNA]</scope>
    <source>
        <strain>PCC 7120 / SAG 25.82 / UTEX 2576</strain>
    </source>
</reference>
<sequence>MDTIAIPALNRPVDATVEIPGSKSITNRALLVAALAQGDSTLENALFSEDSEYFAKCVEQLGIPITLHPHLAQIQVSGKGGDIPAKQADLFVGLAGTAARFITALVALGNGEYRLDGVPRMRERPMGDLVTVLQNSGITINFEGNSGFMPYTIYGQQFAGGHFRLKANQTSQQLSALLMIAPYAQQDTTIEVEGTLVSQSYVKMTCRLMADFGVDVTQTDDNQFHIKAGQRYQARHYTIEPDASNASYFFAAAAVTGGRVRVNHLTKQSCQGDILWLNVLEQMGCQVIEGADYTEVIGPEQLQGIDIDMNDMSDLVQTLGAIAPYASSPVIIRNVEHIRYKETERIRAVVTELRRLGVKVEEFADGMKIEPTPITPAAIETYHDHRMAMAFAVTGLKTPGIVIQDPGCTAKTFPDYFTRFFKMID</sequence>
<dbReference type="EC" id="2.5.1.19" evidence="1"/>
<dbReference type="EMBL" id="BA000019">
    <property type="protein sequence ID" value="BAB76718.1"/>
    <property type="molecule type" value="Genomic_DNA"/>
</dbReference>
<dbReference type="PIR" id="AC2433">
    <property type="entry name" value="AC2433"/>
</dbReference>
<dbReference type="RefSeq" id="WP_010999145.1">
    <property type="nucleotide sequence ID" value="NZ_RSCN01000014.1"/>
</dbReference>
<dbReference type="SMR" id="Q8YMB5"/>
<dbReference type="STRING" id="103690.gene:10497077"/>
<dbReference type="KEGG" id="ana:all5019"/>
<dbReference type="eggNOG" id="COG0128">
    <property type="taxonomic scope" value="Bacteria"/>
</dbReference>
<dbReference type="OrthoDB" id="9809920at2"/>
<dbReference type="BRENDA" id="2.5.1.19">
    <property type="organism ID" value="4371"/>
</dbReference>
<dbReference type="UniPathway" id="UPA00053">
    <property type="reaction ID" value="UER00089"/>
</dbReference>
<dbReference type="Proteomes" id="UP000002483">
    <property type="component" value="Chromosome"/>
</dbReference>
<dbReference type="GO" id="GO:0005737">
    <property type="term" value="C:cytoplasm"/>
    <property type="evidence" value="ECO:0007669"/>
    <property type="project" value="UniProtKB-SubCell"/>
</dbReference>
<dbReference type="GO" id="GO:0003866">
    <property type="term" value="F:3-phosphoshikimate 1-carboxyvinyltransferase activity"/>
    <property type="evidence" value="ECO:0007669"/>
    <property type="project" value="UniProtKB-UniRule"/>
</dbReference>
<dbReference type="GO" id="GO:0008652">
    <property type="term" value="P:amino acid biosynthetic process"/>
    <property type="evidence" value="ECO:0007669"/>
    <property type="project" value="UniProtKB-KW"/>
</dbReference>
<dbReference type="GO" id="GO:0009073">
    <property type="term" value="P:aromatic amino acid family biosynthetic process"/>
    <property type="evidence" value="ECO:0007669"/>
    <property type="project" value="UniProtKB-KW"/>
</dbReference>
<dbReference type="GO" id="GO:0009423">
    <property type="term" value="P:chorismate biosynthetic process"/>
    <property type="evidence" value="ECO:0007669"/>
    <property type="project" value="UniProtKB-UniRule"/>
</dbReference>
<dbReference type="CDD" id="cd01556">
    <property type="entry name" value="EPSP_synthase"/>
    <property type="match status" value="1"/>
</dbReference>
<dbReference type="Gene3D" id="3.65.10.10">
    <property type="entry name" value="Enolpyruvate transferase domain"/>
    <property type="match status" value="2"/>
</dbReference>
<dbReference type="HAMAP" id="MF_00210">
    <property type="entry name" value="EPSP_synth"/>
    <property type="match status" value="1"/>
</dbReference>
<dbReference type="InterPro" id="IPR001986">
    <property type="entry name" value="Enolpyruvate_Tfrase_dom"/>
</dbReference>
<dbReference type="InterPro" id="IPR036968">
    <property type="entry name" value="Enolpyruvate_Tfrase_sf"/>
</dbReference>
<dbReference type="InterPro" id="IPR006264">
    <property type="entry name" value="EPSP_synthase"/>
</dbReference>
<dbReference type="InterPro" id="IPR023193">
    <property type="entry name" value="EPSP_synthase_CS"/>
</dbReference>
<dbReference type="InterPro" id="IPR013792">
    <property type="entry name" value="RNA3'P_cycl/enolpyr_Trfase_a/b"/>
</dbReference>
<dbReference type="NCBIfam" id="TIGR01356">
    <property type="entry name" value="aroA"/>
    <property type="match status" value="1"/>
</dbReference>
<dbReference type="PANTHER" id="PTHR21090">
    <property type="entry name" value="AROM/DEHYDROQUINATE SYNTHASE"/>
    <property type="match status" value="1"/>
</dbReference>
<dbReference type="PANTHER" id="PTHR21090:SF5">
    <property type="entry name" value="PENTAFUNCTIONAL AROM POLYPEPTIDE"/>
    <property type="match status" value="1"/>
</dbReference>
<dbReference type="Pfam" id="PF00275">
    <property type="entry name" value="EPSP_synthase"/>
    <property type="match status" value="1"/>
</dbReference>
<dbReference type="PIRSF" id="PIRSF000505">
    <property type="entry name" value="EPSPS"/>
    <property type="match status" value="1"/>
</dbReference>
<dbReference type="SUPFAM" id="SSF55205">
    <property type="entry name" value="EPT/RTPC-like"/>
    <property type="match status" value="1"/>
</dbReference>
<dbReference type="PROSITE" id="PS00104">
    <property type="entry name" value="EPSP_SYNTHASE_1"/>
    <property type="match status" value="1"/>
</dbReference>
<dbReference type="PROSITE" id="PS00885">
    <property type="entry name" value="EPSP_SYNTHASE_2"/>
    <property type="match status" value="1"/>
</dbReference>
<accession>Q8YMB5</accession>
<organism>
    <name type="scientific">Nostoc sp. (strain PCC 7120 / SAG 25.82 / UTEX 2576)</name>
    <dbReference type="NCBI Taxonomy" id="103690"/>
    <lineage>
        <taxon>Bacteria</taxon>
        <taxon>Bacillati</taxon>
        <taxon>Cyanobacteriota</taxon>
        <taxon>Cyanophyceae</taxon>
        <taxon>Nostocales</taxon>
        <taxon>Nostocaceae</taxon>
        <taxon>Nostoc</taxon>
    </lineage>
</organism>
<name>AROA_NOSS1</name>
<comment type="function">
    <text evidence="1">Catalyzes the transfer of the enolpyruvyl moiety of phosphoenolpyruvate (PEP) to the 5-hydroxyl of shikimate-3-phosphate (S3P) to produce enolpyruvyl shikimate-3-phosphate and inorganic phosphate.</text>
</comment>
<comment type="catalytic activity">
    <reaction evidence="1">
        <text>3-phosphoshikimate + phosphoenolpyruvate = 5-O-(1-carboxyvinyl)-3-phosphoshikimate + phosphate</text>
        <dbReference type="Rhea" id="RHEA:21256"/>
        <dbReference type="ChEBI" id="CHEBI:43474"/>
        <dbReference type="ChEBI" id="CHEBI:57701"/>
        <dbReference type="ChEBI" id="CHEBI:58702"/>
        <dbReference type="ChEBI" id="CHEBI:145989"/>
        <dbReference type="EC" id="2.5.1.19"/>
    </reaction>
    <physiologicalReaction direction="left-to-right" evidence="1">
        <dbReference type="Rhea" id="RHEA:21257"/>
    </physiologicalReaction>
</comment>
<comment type="pathway">
    <text evidence="1">Metabolic intermediate biosynthesis; chorismate biosynthesis; chorismate from D-erythrose 4-phosphate and phosphoenolpyruvate: step 6/7.</text>
</comment>
<comment type="subunit">
    <text evidence="1">Monomer.</text>
</comment>
<comment type="subcellular location">
    <subcellularLocation>
        <location evidence="1">Cytoplasm</location>
    </subcellularLocation>
</comment>
<comment type="similarity">
    <text evidence="1">Belongs to the EPSP synthase family.</text>
</comment>
<keyword id="KW-0028">Amino-acid biosynthesis</keyword>
<keyword id="KW-0057">Aromatic amino acid biosynthesis</keyword>
<keyword id="KW-0963">Cytoplasm</keyword>
<keyword id="KW-1185">Reference proteome</keyword>
<keyword id="KW-0808">Transferase</keyword>
<proteinExistence type="inferred from homology"/>